<keyword id="KW-0903">Direct protein sequencing</keyword>
<keyword id="KW-1015">Disulfide bond</keyword>
<keyword id="KW-0959">Myotoxin</keyword>
<keyword id="KW-0964">Secreted</keyword>
<keyword id="KW-0732">Signal</keyword>
<keyword id="KW-0800">Toxin</keyword>
<dbReference type="EMBL" id="AF269130">
    <property type="protein sequence ID" value="AAL36973.1"/>
    <property type="molecule type" value="mRNA"/>
</dbReference>
<dbReference type="SMR" id="Q8UVZ7"/>
<dbReference type="GO" id="GO:0005576">
    <property type="term" value="C:extracellular region"/>
    <property type="evidence" value="ECO:0007669"/>
    <property type="project" value="UniProtKB-SubCell"/>
</dbReference>
<dbReference type="GO" id="GO:0005509">
    <property type="term" value="F:calcium ion binding"/>
    <property type="evidence" value="ECO:0007669"/>
    <property type="project" value="InterPro"/>
</dbReference>
<dbReference type="GO" id="GO:0047498">
    <property type="term" value="F:calcium-dependent phospholipase A2 activity"/>
    <property type="evidence" value="ECO:0007669"/>
    <property type="project" value="TreeGrafter"/>
</dbReference>
<dbReference type="GO" id="GO:0005543">
    <property type="term" value="F:phospholipid binding"/>
    <property type="evidence" value="ECO:0007669"/>
    <property type="project" value="TreeGrafter"/>
</dbReference>
<dbReference type="GO" id="GO:0090729">
    <property type="term" value="F:toxin activity"/>
    <property type="evidence" value="ECO:0007669"/>
    <property type="project" value="UniProtKB-KW"/>
</dbReference>
<dbReference type="GO" id="GO:0050482">
    <property type="term" value="P:arachidonate secretion"/>
    <property type="evidence" value="ECO:0007669"/>
    <property type="project" value="InterPro"/>
</dbReference>
<dbReference type="GO" id="GO:0016042">
    <property type="term" value="P:lipid catabolic process"/>
    <property type="evidence" value="ECO:0007669"/>
    <property type="project" value="InterPro"/>
</dbReference>
<dbReference type="GO" id="GO:0042130">
    <property type="term" value="P:negative regulation of T cell proliferation"/>
    <property type="evidence" value="ECO:0007669"/>
    <property type="project" value="TreeGrafter"/>
</dbReference>
<dbReference type="GO" id="GO:0006644">
    <property type="term" value="P:phospholipid metabolic process"/>
    <property type="evidence" value="ECO:0007669"/>
    <property type="project" value="InterPro"/>
</dbReference>
<dbReference type="CDD" id="cd00125">
    <property type="entry name" value="PLA2c"/>
    <property type="match status" value="1"/>
</dbReference>
<dbReference type="FunFam" id="1.20.90.10:FF:000001">
    <property type="entry name" value="Basic phospholipase A2 homolog"/>
    <property type="match status" value="1"/>
</dbReference>
<dbReference type="Gene3D" id="1.20.90.10">
    <property type="entry name" value="Phospholipase A2 domain"/>
    <property type="match status" value="1"/>
</dbReference>
<dbReference type="InterPro" id="IPR001211">
    <property type="entry name" value="PLipase_A2"/>
</dbReference>
<dbReference type="InterPro" id="IPR033112">
    <property type="entry name" value="PLipase_A2_Asp_AS"/>
</dbReference>
<dbReference type="InterPro" id="IPR016090">
    <property type="entry name" value="PLipase_A2_dom"/>
</dbReference>
<dbReference type="InterPro" id="IPR036444">
    <property type="entry name" value="PLipase_A2_dom_sf"/>
</dbReference>
<dbReference type="InterPro" id="IPR033113">
    <property type="entry name" value="PLipase_A2_His_AS"/>
</dbReference>
<dbReference type="PANTHER" id="PTHR11716">
    <property type="entry name" value="PHOSPHOLIPASE A2 FAMILY MEMBER"/>
    <property type="match status" value="1"/>
</dbReference>
<dbReference type="PANTHER" id="PTHR11716:SF9">
    <property type="entry name" value="PHOSPHOLIPASE A2, MEMBRANE ASSOCIATED"/>
    <property type="match status" value="1"/>
</dbReference>
<dbReference type="Pfam" id="PF00068">
    <property type="entry name" value="Phospholip_A2_1"/>
    <property type="match status" value="1"/>
</dbReference>
<dbReference type="PRINTS" id="PR00389">
    <property type="entry name" value="PHPHLIPASEA2"/>
</dbReference>
<dbReference type="SMART" id="SM00085">
    <property type="entry name" value="PA2c"/>
    <property type="match status" value="1"/>
</dbReference>
<dbReference type="SUPFAM" id="SSF48619">
    <property type="entry name" value="Phospholipase A2, PLA2"/>
    <property type="match status" value="1"/>
</dbReference>
<dbReference type="PROSITE" id="PS00119">
    <property type="entry name" value="PA2_ASP"/>
    <property type="match status" value="1"/>
</dbReference>
<dbReference type="PROSITE" id="PS00118">
    <property type="entry name" value="PA2_HIS"/>
    <property type="match status" value="1"/>
</dbReference>
<feature type="signal peptide" evidence="4 5">
    <location>
        <begin position="1"/>
        <end position="16"/>
    </location>
</feature>
<feature type="chain" id="PRO_0000022852" description="Basic phospholipase A2 homolog Cax-K49">
    <location>
        <begin position="17"/>
        <end position="137"/>
    </location>
</feature>
<feature type="region of interest" description="Important for membrane-damaging activities in eukaryotes and bacteria; heparin-binding" evidence="2">
    <location>
        <begin position="121"/>
        <end position="133"/>
    </location>
</feature>
<feature type="site" description="Important residue of the cationic membrane-docking site (MDoS)" evidence="1">
    <location>
        <position position="121"/>
    </location>
</feature>
<feature type="site" description="Important residue of the cationic membrane-docking site (MDoS)" evidence="1">
    <location>
        <position position="124"/>
    </location>
</feature>
<feature type="site" description="Cationic membrane-docking site (MDoS)" evidence="1">
    <location>
        <position position="128"/>
    </location>
</feature>
<feature type="site" description="Hydrophobic membrane-disruption site (MDiS)" evidence="1">
    <location>
        <position position="130"/>
    </location>
</feature>
<feature type="site" description="Cationic membrane-docking site (MDoS)" evidence="1">
    <location>
        <position position="133"/>
    </location>
</feature>
<feature type="disulfide bond" evidence="3">
    <location>
        <begin position="42"/>
        <end position="131"/>
    </location>
</feature>
<feature type="disulfide bond" evidence="3">
    <location>
        <begin position="44"/>
        <end position="60"/>
    </location>
</feature>
<feature type="disulfide bond" evidence="3">
    <location>
        <begin position="59"/>
        <end position="111"/>
    </location>
</feature>
<feature type="disulfide bond" evidence="3">
    <location>
        <begin position="65"/>
        <end position="137"/>
    </location>
</feature>
<feature type="disulfide bond" evidence="3">
    <location>
        <begin position="66"/>
        <end position="104"/>
    </location>
</feature>
<feature type="disulfide bond" evidence="3">
    <location>
        <begin position="73"/>
        <end position="97"/>
    </location>
</feature>
<feature type="disulfide bond" evidence="3">
    <location>
        <begin position="91"/>
        <end position="102"/>
    </location>
</feature>
<sequence length="137" mass="15597">MRTFWIVAMLLVGVEGSLVELGKMILQETGKNPITSYGIYGCNCGVGSRHKPKDGTDRCCFVHKCCYKKLTDCDPKMDGYTYSFKDKTIICDVNNPCLKEMCECDKAVAICLRENLDTYNKKYKIYPKFLCKKPDTC</sequence>
<evidence type="ECO:0000250" key="1">
    <source>
        <dbReference type="UniProtKB" id="I6L8L6"/>
    </source>
</evidence>
<evidence type="ECO:0000250" key="2">
    <source>
        <dbReference type="UniProtKB" id="P24605"/>
    </source>
</evidence>
<evidence type="ECO:0000250" key="3">
    <source>
        <dbReference type="UniProtKB" id="Q90249"/>
    </source>
</evidence>
<evidence type="ECO:0000269" key="4">
    <source>
    </source>
</evidence>
<evidence type="ECO:0000269" key="5">
    <source>
    </source>
</evidence>
<evidence type="ECO:0000303" key="6">
    <source>
    </source>
</evidence>
<evidence type="ECO:0000305" key="7"/>
<evidence type="ECO:0000305" key="8">
    <source>
    </source>
</evidence>
<evidence type="ECO:0000305" key="9">
    <source>
    </source>
</evidence>
<reference key="1">
    <citation type="journal article" date="2001" name="Arch. Biochem. Biophys.">
        <title>Purification, sequencing, and phylogenetic analyses of novel Lys-49 phospholipases A(2) from the venoms of rattlesnakes and other pit vipers.</title>
        <authorList>
            <person name="Tsai I.-H."/>
            <person name="Chen Y.-H."/>
            <person name="Wang Y.-M."/>
            <person name="Tu M.-C."/>
            <person name="Tu A.T."/>
        </authorList>
    </citation>
    <scope>NUCLEOTIDE SEQUENCE [MRNA]</scope>
    <scope>PROTEIN SEQUENCE OF 17-45</scope>
    <scope>FUNCTION</scope>
    <scope>MASS SPECTROMETRY</scope>
    <scope>SUBCELLULAR LOCATION</scope>
    <source>
        <tissue>Venom</tissue>
        <tissue>Venom gland</tissue>
    </source>
</reference>
<reference key="2">
    <citation type="journal article" date="2009" name="J. Proteome Res.">
        <title>Exploring the venom proteome of the western diamondback rattlesnake, Crotalus atrox, via snake venomics and combinatorial peptide ligand library approaches.</title>
        <authorList>
            <person name="Calvete J.J."/>
            <person name="Fasoli E."/>
            <person name="Sanz L."/>
            <person name="Boschetti E."/>
            <person name="Righetti P.G."/>
        </authorList>
    </citation>
    <scope>PROTEIN SEQUENCE OF 17-49; 54-64; 77-85 AND 88-99</scope>
    <scope>IDENTIFICATION BY MASS SPECTROMETRY</scope>
    <scope>SUBCELLULAR LOCATION</scope>
    <source>
        <tissue>Venom</tissue>
    </source>
</reference>
<proteinExistence type="evidence at protein level"/>
<name>PA2H_CROAT</name>
<accession>Q8UVZ7</accession>
<organism>
    <name type="scientific">Crotalus atrox</name>
    <name type="common">Western diamondback rattlesnake</name>
    <dbReference type="NCBI Taxonomy" id="8730"/>
    <lineage>
        <taxon>Eukaryota</taxon>
        <taxon>Metazoa</taxon>
        <taxon>Chordata</taxon>
        <taxon>Craniata</taxon>
        <taxon>Vertebrata</taxon>
        <taxon>Euteleostomi</taxon>
        <taxon>Lepidosauria</taxon>
        <taxon>Squamata</taxon>
        <taxon>Bifurcata</taxon>
        <taxon>Unidentata</taxon>
        <taxon>Episquamata</taxon>
        <taxon>Toxicofera</taxon>
        <taxon>Serpentes</taxon>
        <taxon>Colubroidea</taxon>
        <taxon>Viperidae</taxon>
        <taxon>Crotalinae</taxon>
        <taxon>Crotalus</taxon>
    </lineage>
</organism>
<comment type="function">
    <text evidence="1 4">Snake venom phospholipase A2 homolog that lacks enzymatic activity (PubMed:11594738). Displays edema-inducing activities and may be myotoxic (PubMed:11594738). A model of myotoxic mechanism has been proposed: an apo Lys49-PLA2 is activated by the entrance of a hydrophobic molecule (e.g. fatty acid) at the hydrophobic channel of the protein leading to a reorientation of a monomer (By similarity). This reorientation causes a transition between 'inactive' to 'active' states, causing alignment of C-terminal and membrane-docking sites (MDoS) side-by-side and putting the membrane-disruption sites (MDiS) in the same plane, exposed to solvent and in a symmetric position for both monomers (By similarity). The MDoS region stabilizes the toxin on membrane by the interaction of charged residues with phospholipid head groups (By similarity). Subsequently, the MDiS region destabilizes the membrane with penetration of hydrophobic residues (By similarity). This insertion causes a disorganization of the membrane, allowing an uncontrolled influx of ions (i.e. calcium and sodium), and eventually triggering irreversible intracellular alterations and cell death (By similarity).</text>
</comment>
<comment type="subunit">
    <text evidence="1">Homodimer; non-covalently linked.</text>
</comment>
<comment type="subcellular location">
    <subcellularLocation>
        <location evidence="4 5">Secreted</location>
    </subcellularLocation>
</comment>
<comment type="tissue specificity">
    <text evidence="8 9">Expressed by the venom gland.</text>
</comment>
<comment type="mass spectrometry" mass="13779.0" method="Electrospray" evidence="4"/>
<comment type="similarity">
    <text evidence="7">Belongs to the phospholipase A2 family. Group II subfamily. K49 sub-subfamily.</text>
</comment>
<comment type="caution">
    <text evidence="7">Does not bind calcium as one of the calcium-binding sites is lost (Asp-&gt;Lys in position 64, which corresponds to 'Lys-49' in the current nomenclature).</text>
</comment>
<protein>
    <recommendedName>
        <fullName evidence="6">Basic phospholipase A2 homolog Cax-K49</fullName>
        <shortName>svPLA2 homolog</shortName>
    </recommendedName>
</protein>